<dbReference type="EC" id="7.1.1.-" evidence="1"/>
<dbReference type="EMBL" id="AP007255">
    <property type="protein sequence ID" value="BAE51578.1"/>
    <property type="molecule type" value="Genomic_DNA"/>
</dbReference>
<dbReference type="SMR" id="Q2W3J7"/>
<dbReference type="STRING" id="342108.amb2774"/>
<dbReference type="KEGG" id="mag:amb2774"/>
<dbReference type="HOGENOM" id="CLU_007100_1_3_5"/>
<dbReference type="OrthoDB" id="9811718at2"/>
<dbReference type="Proteomes" id="UP000007058">
    <property type="component" value="Chromosome"/>
</dbReference>
<dbReference type="GO" id="GO:0005886">
    <property type="term" value="C:plasma membrane"/>
    <property type="evidence" value="ECO:0007669"/>
    <property type="project" value="UniProtKB-SubCell"/>
</dbReference>
<dbReference type="GO" id="GO:0008137">
    <property type="term" value="F:NADH dehydrogenase (ubiquinone) activity"/>
    <property type="evidence" value="ECO:0007669"/>
    <property type="project" value="InterPro"/>
</dbReference>
<dbReference type="GO" id="GO:0050136">
    <property type="term" value="F:NADH:ubiquinone reductase (non-electrogenic) activity"/>
    <property type="evidence" value="ECO:0007669"/>
    <property type="project" value="UniProtKB-UniRule"/>
</dbReference>
<dbReference type="GO" id="GO:0048038">
    <property type="term" value="F:quinone binding"/>
    <property type="evidence" value="ECO:0007669"/>
    <property type="project" value="UniProtKB-KW"/>
</dbReference>
<dbReference type="GO" id="GO:0042773">
    <property type="term" value="P:ATP synthesis coupled electron transport"/>
    <property type="evidence" value="ECO:0007669"/>
    <property type="project" value="InterPro"/>
</dbReference>
<dbReference type="HAMAP" id="MF_00445">
    <property type="entry name" value="NDH1_NuoN_1"/>
    <property type="match status" value="1"/>
</dbReference>
<dbReference type="InterPro" id="IPR010096">
    <property type="entry name" value="NADH-Q_OxRdtase_suN/2"/>
</dbReference>
<dbReference type="InterPro" id="IPR001750">
    <property type="entry name" value="ND/Mrp_TM"/>
</dbReference>
<dbReference type="NCBIfam" id="TIGR01770">
    <property type="entry name" value="NDH_I_N"/>
    <property type="match status" value="1"/>
</dbReference>
<dbReference type="NCBIfam" id="NF004440">
    <property type="entry name" value="PRK05777.1-3"/>
    <property type="match status" value="1"/>
</dbReference>
<dbReference type="PANTHER" id="PTHR22773">
    <property type="entry name" value="NADH DEHYDROGENASE"/>
    <property type="match status" value="1"/>
</dbReference>
<dbReference type="Pfam" id="PF00361">
    <property type="entry name" value="Proton_antipo_M"/>
    <property type="match status" value="1"/>
</dbReference>
<evidence type="ECO:0000255" key="1">
    <source>
        <dbReference type="HAMAP-Rule" id="MF_00445"/>
    </source>
</evidence>
<proteinExistence type="inferred from homology"/>
<comment type="function">
    <text evidence="1">NDH-1 shuttles electrons from NADH, via FMN and iron-sulfur (Fe-S) centers, to quinones in the respiratory chain. The immediate electron acceptor for the enzyme in this species is believed to be ubiquinone. Couples the redox reaction to proton translocation (for every two electrons transferred, four hydrogen ions are translocated across the cytoplasmic membrane), and thus conserves the redox energy in a proton gradient.</text>
</comment>
<comment type="catalytic activity">
    <reaction evidence="1">
        <text>a quinone + NADH + 5 H(+)(in) = a quinol + NAD(+) + 4 H(+)(out)</text>
        <dbReference type="Rhea" id="RHEA:57888"/>
        <dbReference type="ChEBI" id="CHEBI:15378"/>
        <dbReference type="ChEBI" id="CHEBI:24646"/>
        <dbReference type="ChEBI" id="CHEBI:57540"/>
        <dbReference type="ChEBI" id="CHEBI:57945"/>
        <dbReference type="ChEBI" id="CHEBI:132124"/>
    </reaction>
</comment>
<comment type="subunit">
    <text evidence="1">NDH-1 is composed of 14 different subunits. Subunits NuoA, H, J, K, L, M, N constitute the membrane sector of the complex.</text>
</comment>
<comment type="subcellular location">
    <subcellularLocation>
        <location evidence="1">Cell inner membrane</location>
        <topology evidence="1">Multi-pass membrane protein</topology>
    </subcellularLocation>
</comment>
<comment type="similarity">
    <text evidence="1">Belongs to the complex I subunit 2 family.</text>
</comment>
<protein>
    <recommendedName>
        <fullName evidence="1">NADH-quinone oxidoreductase subunit N</fullName>
        <ecNumber evidence="1">7.1.1.-</ecNumber>
    </recommendedName>
    <alternativeName>
        <fullName evidence="1">NADH dehydrogenase I subunit N</fullName>
    </alternativeName>
    <alternativeName>
        <fullName evidence="1">NDH-1 subunit N</fullName>
    </alternativeName>
</protein>
<reference key="1">
    <citation type="journal article" date="2005" name="DNA Res.">
        <title>Complete genome sequence of the facultative anaerobic magnetotactic bacterium Magnetospirillum sp. strain AMB-1.</title>
        <authorList>
            <person name="Matsunaga T."/>
            <person name="Okamura Y."/>
            <person name="Fukuda Y."/>
            <person name="Wahyudi A.T."/>
            <person name="Murase Y."/>
            <person name="Takeyama H."/>
        </authorList>
    </citation>
    <scope>NUCLEOTIDE SEQUENCE [LARGE SCALE GENOMIC DNA]</scope>
    <source>
        <strain>ATCC 700264 / AMB-1</strain>
    </source>
</reference>
<sequence length="487" mass="51858">MIKTLDLVPVLPEIFMAVAGLALLMLGVFRKEDSTKSVSVLVILALGAAMVLVSSLGGERLTAFNGLFVADRFAGFAKGLVLVASAIATAMSLPYLEREKIGRFEYPVLVLFATLGMMMMISANDFIALYLGLELQSLALYVLAAYNRDNARATEAGLKYFVLGSLASGLLLYGISLLYGFAGTTSFEGLANLFAGGHDHPIKPNMGIIAGLVFVLAGLSFKVSAVPFHMWAPDVYEGAPTPVTSFFAVAPKIAALCLLVRVMTGPFADLVEQWRQVVTFIAIGSMFVGSFAAVVQTNIKRLMAYSSIGHVGFVLVGIAAGSTLGIQGVLIYLAIYLFMNVGAFAVILSMRQKGRMVEGIDDLAGLSKTHPMMAFVMAVLMFSMAGVPPLAGFWGKFYVFMAAIESGLYTLSILGVLSSVVSTYYYLRIVKVMYFDEPVEAFDKPVGTSMTLVMAVSTIVILAFTLIPAPLVTSAKAAAQVLFPAAG</sequence>
<gene>
    <name evidence="1" type="primary">nuoN</name>
    <name type="ordered locus">amb2774</name>
</gene>
<feature type="chain" id="PRO_0000391175" description="NADH-quinone oxidoreductase subunit N">
    <location>
        <begin position="1"/>
        <end position="487"/>
    </location>
</feature>
<feature type="transmembrane region" description="Helical" evidence="1">
    <location>
        <begin position="9"/>
        <end position="29"/>
    </location>
</feature>
<feature type="transmembrane region" description="Helical" evidence="1">
    <location>
        <begin position="38"/>
        <end position="58"/>
    </location>
</feature>
<feature type="transmembrane region" description="Helical" evidence="1">
    <location>
        <begin position="73"/>
        <end position="93"/>
    </location>
</feature>
<feature type="transmembrane region" description="Helical" evidence="1">
    <location>
        <begin position="108"/>
        <end position="128"/>
    </location>
</feature>
<feature type="transmembrane region" description="Helical" evidence="1">
    <location>
        <begin position="161"/>
        <end position="181"/>
    </location>
</feature>
<feature type="transmembrane region" description="Helical" evidence="1">
    <location>
        <begin position="208"/>
        <end position="228"/>
    </location>
</feature>
<feature type="transmembrane region" description="Helical" evidence="1">
    <location>
        <begin position="240"/>
        <end position="260"/>
    </location>
</feature>
<feature type="transmembrane region" description="Helical" evidence="1">
    <location>
        <begin position="277"/>
        <end position="297"/>
    </location>
</feature>
<feature type="transmembrane region" description="Helical" evidence="1">
    <location>
        <begin position="306"/>
        <end position="326"/>
    </location>
</feature>
<feature type="transmembrane region" description="Helical" evidence="1">
    <location>
        <begin position="328"/>
        <end position="348"/>
    </location>
</feature>
<feature type="transmembrane region" description="Helical" evidence="1">
    <location>
        <begin position="374"/>
        <end position="394"/>
    </location>
</feature>
<feature type="transmembrane region" description="Helical" evidence="1">
    <location>
        <begin position="408"/>
        <end position="430"/>
    </location>
</feature>
<feature type="transmembrane region" description="Helical" evidence="1">
    <location>
        <begin position="452"/>
        <end position="472"/>
    </location>
</feature>
<accession>Q2W3J7</accession>
<keyword id="KW-0997">Cell inner membrane</keyword>
<keyword id="KW-1003">Cell membrane</keyword>
<keyword id="KW-0472">Membrane</keyword>
<keyword id="KW-0520">NAD</keyword>
<keyword id="KW-0874">Quinone</keyword>
<keyword id="KW-1278">Translocase</keyword>
<keyword id="KW-0812">Transmembrane</keyword>
<keyword id="KW-1133">Transmembrane helix</keyword>
<keyword id="KW-0813">Transport</keyword>
<keyword id="KW-0830">Ubiquinone</keyword>
<name>NUON_PARM1</name>
<organism>
    <name type="scientific">Paramagnetospirillum magneticum (strain ATCC 700264 / AMB-1)</name>
    <name type="common">Magnetospirillum magneticum</name>
    <dbReference type="NCBI Taxonomy" id="342108"/>
    <lineage>
        <taxon>Bacteria</taxon>
        <taxon>Pseudomonadati</taxon>
        <taxon>Pseudomonadota</taxon>
        <taxon>Alphaproteobacteria</taxon>
        <taxon>Rhodospirillales</taxon>
        <taxon>Magnetospirillaceae</taxon>
        <taxon>Paramagnetospirillum</taxon>
    </lineage>
</organism>